<feature type="chain" id="PRO_1000093994" description="4-hydroxy-tetrahydrodipicolinate reductase">
    <location>
        <begin position="1"/>
        <end position="273"/>
    </location>
</feature>
<feature type="active site" description="Proton donor/acceptor" evidence="1">
    <location>
        <position position="159"/>
    </location>
</feature>
<feature type="active site" description="Proton donor" evidence="1">
    <location>
        <position position="163"/>
    </location>
</feature>
<feature type="binding site" evidence="1">
    <location>
        <begin position="12"/>
        <end position="17"/>
    </location>
    <ligand>
        <name>NAD(+)</name>
        <dbReference type="ChEBI" id="CHEBI:57540"/>
    </ligand>
</feature>
<feature type="binding site" evidence="1">
    <location>
        <position position="38"/>
    </location>
    <ligand>
        <name>NAD(+)</name>
        <dbReference type="ChEBI" id="CHEBI:57540"/>
    </ligand>
</feature>
<feature type="binding site" evidence="1">
    <location>
        <position position="39"/>
    </location>
    <ligand>
        <name>NADP(+)</name>
        <dbReference type="ChEBI" id="CHEBI:58349"/>
    </ligand>
</feature>
<feature type="binding site" evidence="1">
    <location>
        <begin position="102"/>
        <end position="104"/>
    </location>
    <ligand>
        <name>NAD(+)</name>
        <dbReference type="ChEBI" id="CHEBI:57540"/>
    </ligand>
</feature>
<feature type="binding site" evidence="1">
    <location>
        <begin position="126"/>
        <end position="129"/>
    </location>
    <ligand>
        <name>NAD(+)</name>
        <dbReference type="ChEBI" id="CHEBI:57540"/>
    </ligand>
</feature>
<feature type="binding site" evidence="1">
    <location>
        <position position="160"/>
    </location>
    <ligand>
        <name>(S)-2,3,4,5-tetrahydrodipicolinate</name>
        <dbReference type="ChEBI" id="CHEBI:16845"/>
    </ligand>
</feature>
<feature type="binding site" evidence="1">
    <location>
        <begin position="169"/>
        <end position="170"/>
    </location>
    <ligand>
        <name>(S)-2,3,4,5-tetrahydrodipicolinate</name>
        <dbReference type="ChEBI" id="CHEBI:16845"/>
    </ligand>
</feature>
<accession>B5F744</accession>
<comment type="function">
    <text evidence="1">Catalyzes the conversion of 4-hydroxy-tetrahydrodipicolinate (HTPA) to tetrahydrodipicolinate.</text>
</comment>
<comment type="catalytic activity">
    <reaction evidence="1">
        <text>(S)-2,3,4,5-tetrahydrodipicolinate + NAD(+) + H2O = (2S,4S)-4-hydroxy-2,3,4,5-tetrahydrodipicolinate + NADH + H(+)</text>
        <dbReference type="Rhea" id="RHEA:35323"/>
        <dbReference type="ChEBI" id="CHEBI:15377"/>
        <dbReference type="ChEBI" id="CHEBI:15378"/>
        <dbReference type="ChEBI" id="CHEBI:16845"/>
        <dbReference type="ChEBI" id="CHEBI:57540"/>
        <dbReference type="ChEBI" id="CHEBI:57945"/>
        <dbReference type="ChEBI" id="CHEBI:67139"/>
        <dbReference type="EC" id="1.17.1.8"/>
    </reaction>
</comment>
<comment type="catalytic activity">
    <reaction evidence="1">
        <text>(S)-2,3,4,5-tetrahydrodipicolinate + NADP(+) + H2O = (2S,4S)-4-hydroxy-2,3,4,5-tetrahydrodipicolinate + NADPH + H(+)</text>
        <dbReference type="Rhea" id="RHEA:35331"/>
        <dbReference type="ChEBI" id="CHEBI:15377"/>
        <dbReference type="ChEBI" id="CHEBI:15378"/>
        <dbReference type="ChEBI" id="CHEBI:16845"/>
        <dbReference type="ChEBI" id="CHEBI:57783"/>
        <dbReference type="ChEBI" id="CHEBI:58349"/>
        <dbReference type="ChEBI" id="CHEBI:67139"/>
        <dbReference type="EC" id="1.17.1.8"/>
    </reaction>
</comment>
<comment type="pathway">
    <text evidence="1">Amino-acid biosynthesis; L-lysine biosynthesis via DAP pathway; (S)-tetrahydrodipicolinate from L-aspartate: step 4/4.</text>
</comment>
<comment type="subunit">
    <text evidence="1">Homotetramer.</text>
</comment>
<comment type="subcellular location">
    <subcellularLocation>
        <location evidence="1">Cytoplasm</location>
    </subcellularLocation>
</comment>
<comment type="similarity">
    <text evidence="1">Belongs to the DapB family.</text>
</comment>
<comment type="caution">
    <text evidence="2">Was originally thought to be a dihydrodipicolinate reductase (DHDPR), catalyzing the conversion of dihydrodipicolinate to tetrahydrodipicolinate. However, it was shown in E.coli that the substrate of the enzymatic reaction is not dihydrodipicolinate (DHDP) but in fact (2S,4S)-4-hydroxy-2,3,4,5-tetrahydrodipicolinic acid (HTPA), the product released by the DapA-catalyzed reaction.</text>
</comment>
<reference key="1">
    <citation type="journal article" date="2011" name="J. Bacteriol.">
        <title>Comparative genomics of 28 Salmonella enterica isolates: evidence for CRISPR-mediated adaptive sublineage evolution.</title>
        <authorList>
            <person name="Fricke W.F."/>
            <person name="Mammel M.K."/>
            <person name="McDermott P.F."/>
            <person name="Tartera C."/>
            <person name="White D.G."/>
            <person name="Leclerc J.E."/>
            <person name="Ravel J."/>
            <person name="Cebula T.A."/>
        </authorList>
    </citation>
    <scope>NUCLEOTIDE SEQUENCE [LARGE SCALE GENOMIC DNA]</scope>
    <source>
        <strain>SL483</strain>
    </source>
</reference>
<organism>
    <name type="scientific">Salmonella agona (strain SL483)</name>
    <dbReference type="NCBI Taxonomy" id="454166"/>
    <lineage>
        <taxon>Bacteria</taxon>
        <taxon>Pseudomonadati</taxon>
        <taxon>Pseudomonadota</taxon>
        <taxon>Gammaproteobacteria</taxon>
        <taxon>Enterobacterales</taxon>
        <taxon>Enterobacteriaceae</taxon>
        <taxon>Salmonella</taxon>
    </lineage>
</organism>
<dbReference type="EC" id="1.17.1.8" evidence="1"/>
<dbReference type="EMBL" id="CP001138">
    <property type="protein sequence ID" value="ACH52391.1"/>
    <property type="molecule type" value="Genomic_DNA"/>
</dbReference>
<dbReference type="RefSeq" id="WP_000544032.1">
    <property type="nucleotide sequence ID" value="NC_011149.1"/>
</dbReference>
<dbReference type="SMR" id="B5F744"/>
<dbReference type="KEGG" id="sea:SeAg_B0071"/>
<dbReference type="HOGENOM" id="CLU_047479_2_1_6"/>
<dbReference type="UniPathway" id="UPA00034">
    <property type="reaction ID" value="UER00018"/>
</dbReference>
<dbReference type="Proteomes" id="UP000008819">
    <property type="component" value="Chromosome"/>
</dbReference>
<dbReference type="GO" id="GO:0005829">
    <property type="term" value="C:cytosol"/>
    <property type="evidence" value="ECO:0007669"/>
    <property type="project" value="TreeGrafter"/>
</dbReference>
<dbReference type="GO" id="GO:0008839">
    <property type="term" value="F:4-hydroxy-tetrahydrodipicolinate reductase"/>
    <property type="evidence" value="ECO:0007669"/>
    <property type="project" value="UniProtKB-EC"/>
</dbReference>
<dbReference type="GO" id="GO:0051287">
    <property type="term" value="F:NAD binding"/>
    <property type="evidence" value="ECO:0007669"/>
    <property type="project" value="UniProtKB-UniRule"/>
</dbReference>
<dbReference type="GO" id="GO:0050661">
    <property type="term" value="F:NADP binding"/>
    <property type="evidence" value="ECO:0007669"/>
    <property type="project" value="UniProtKB-UniRule"/>
</dbReference>
<dbReference type="GO" id="GO:0016726">
    <property type="term" value="F:oxidoreductase activity, acting on CH or CH2 groups, NAD or NADP as acceptor"/>
    <property type="evidence" value="ECO:0007669"/>
    <property type="project" value="UniProtKB-UniRule"/>
</dbReference>
<dbReference type="GO" id="GO:0019877">
    <property type="term" value="P:diaminopimelate biosynthetic process"/>
    <property type="evidence" value="ECO:0007669"/>
    <property type="project" value="UniProtKB-UniRule"/>
</dbReference>
<dbReference type="GO" id="GO:0009089">
    <property type="term" value="P:lysine biosynthetic process via diaminopimelate"/>
    <property type="evidence" value="ECO:0007669"/>
    <property type="project" value="UniProtKB-UniRule"/>
</dbReference>
<dbReference type="CDD" id="cd02274">
    <property type="entry name" value="DHDPR_N"/>
    <property type="match status" value="1"/>
</dbReference>
<dbReference type="FunFam" id="3.30.360.10:FF:000004">
    <property type="entry name" value="4-hydroxy-tetrahydrodipicolinate reductase"/>
    <property type="match status" value="1"/>
</dbReference>
<dbReference type="FunFam" id="3.40.50.720:FF:000048">
    <property type="entry name" value="4-hydroxy-tetrahydrodipicolinate reductase"/>
    <property type="match status" value="1"/>
</dbReference>
<dbReference type="Gene3D" id="3.30.360.10">
    <property type="entry name" value="Dihydrodipicolinate Reductase, domain 2"/>
    <property type="match status" value="1"/>
</dbReference>
<dbReference type="Gene3D" id="3.40.50.720">
    <property type="entry name" value="NAD(P)-binding Rossmann-like Domain"/>
    <property type="match status" value="1"/>
</dbReference>
<dbReference type="HAMAP" id="MF_00102">
    <property type="entry name" value="DapB"/>
    <property type="match status" value="1"/>
</dbReference>
<dbReference type="InterPro" id="IPR022663">
    <property type="entry name" value="DapB_C"/>
</dbReference>
<dbReference type="InterPro" id="IPR000846">
    <property type="entry name" value="DapB_N"/>
</dbReference>
<dbReference type="InterPro" id="IPR022664">
    <property type="entry name" value="DapB_N_CS"/>
</dbReference>
<dbReference type="InterPro" id="IPR023940">
    <property type="entry name" value="DHDPR_bac"/>
</dbReference>
<dbReference type="InterPro" id="IPR036291">
    <property type="entry name" value="NAD(P)-bd_dom_sf"/>
</dbReference>
<dbReference type="NCBIfam" id="TIGR00036">
    <property type="entry name" value="dapB"/>
    <property type="match status" value="1"/>
</dbReference>
<dbReference type="PANTHER" id="PTHR20836:SF0">
    <property type="entry name" value="4-HYDROXY-TETRAHYDRODIPICOLINATE REDUCTASE 1, CHLOROPLASTIC-RELATED"/>
    <property type="match status" value="1"/>
</dbReference>
<dbReference type="PANTHER" id="PTHR20836">
    <property type="entry name" value="DIHYDRODIPICOLINATE REDUCTASE"/>
    <property type="match status" value="1"/>
</dbReference>
<dbReference type="Pfam" id="PF05173">
    <property type="entry name" value="DapB_C"/>
    <property type="match status" value="1"/>
</dbReference>
<dbReference type="Pfam" id="PF01113">
    <property type="entry name" value="DapB_N"/>
    <property type="match status" value="1"/>
</dbReference>
<dbReference type="PIRSF" id="PIRSF000161">
    <property type="entry name" value="DHPR"/>
    <property type="match status" value="1"/>
</dbReference>
<dbReference type="SUPFAM" id="SSF55347">
    <property type="entry name" value="Glyceraldehyde-3-phosphate dehydrogenase-like, C-terminal domain"/>
    <property type="match status" value="1"/>
</dbReference>
<dbReference type="SUPFAM" id="SSF51735">
    <property type="entry name" value="NAD(P)-binding Rossmann-fold domains"/>
    <property type="match status" value="1"/>
</dbReference>
<dbReference type="PROSITE" id="PS01298">
    <property type="entry name" value="DAPB"/>
    <property type="match status" value="1"/>
</dbReference>
<protein>
    <recommendedName>
        <fullName evidence="1">4-hydroxy-tetrahydrodipicolinate reductase</fullName>
        <shortName evidence="1">HTPA reductase</shortName>
        <ecNumber evidence="1">1.17.1.8</ecNumber>
    </recommendedName>
</protein>
<keyword id="KW-0028">Amino-acid biosynthesis</keyword>
<keyword id="KW-0963">Cytoplasm</keyword>
<keyword id="KW-0220">Diaminopimelate biosynthesis</keyword>
<keyword id="KW-0457">Lysine biosynthesis</keyword>
<keyword id="KW-0520">NAD</keyword>
<keyword id="KW-0521">NADP</keyword>
<keyword id="KW-0560">Oxidoreductase</keyword>
<gene>
    <name evidence="1" type="primary">dapB</name>
    <name type="ordered locus">SeAg_B0071</name>
</gene>
<sequence length="273" mass="28877">MHEAQIRVAIAGAGGRMGRQLIQAAMAMEGVQLGAALEREGSSLLGSDAGELAGAGKSGVIVQSSLEAVKDDFDVFIDFTRPEGTLTHLAFCRQHGKGMVIGTTGFDDAGKQAIREASQEIAIVFAANFSVGVNVMLKLLEKAAKVMGDYSDIEIIEAHHRHKVDAPSGTALAMGEAIAGALDKNLKDCAVYSREGYTGERVPGTIGFATVRAGDIVGEHTAMFADIGERVEITHKASSRMTFANGALRSALWLKTKKNGLFDMRDVLGLDVL</sequence>
<name>DAPB_SALA4</name>
<evidence type="ECO:0000255" key="1">
    <source>
        <dbReference type="HAMAP-Rule" id="MF_00102"/>
    </source>
</evidence>
<evidence type="ECO:0000305" key="2"/>
<proteinExistence type="inferred from homology"/>